<comment type="function">
    <text evidence="7 8 9">Lectin-like receptor for natural killer (NK) cells (PubMed:14707119, PubMed:15069013, PubMed:18713988). Can either inhibit or activate NK cell cytotoxic activity, depending on its binding partner (PubMed:14707119, PubMed:15069013, PubMed:18713988). Heterodimer formation with KLRI1 mediates NK cell inhibition whereas heterodimer formation with KLRI2 mediates NK cell activation (PubMed:18713988). Plays a role in allogeneic recognition by the immune system (PubMed:14707119, PubMed:15069013).</text>
</comment>
<comment type="subunit">
    <text evidence="7 9">Heterodimer; with KLRI1 or KLRI2.</text>
</comment>
<comment type="subcellular location">
    <subcellularLocation>
        <location evidence="6 7 8 9">Cell membrane</location>
        <topology evidence="2">Single-pass type II membrane protein</topology>
    </subcellularLocation>
</comment>
<comment type="tissue specificity">
    <text evidence="5 6 7">Expressed in natural killer (NK) cells (at protein level) (PubMed:12715246, PubMed:12782717, PubMed:14707119). Also detected in natural killer T (NKT) cells (at protein level) (PubMed:12715246, PubMed:14707119). Has little or no expression in T cells (at protein level) (PubMed:12715246, PubMed:14707119).</text>
</comment>
<comment type="disruption phenotype">
    <text evidence="8">Viable and fertile, with no gross abnormalities. Development of natural killer (NK) cells appears to be normal. Cytolytic activity of activated NK cells against allogeneic target cells is significantly reduced.</text>
</comment>
<organism>
    <name type="scientific">Mus musculus</name>
    <name type="common">Mouse</name>
    <dbReference type="NCBI Taxonomy" id="10090"/>
    <lineage>
        <taxon>Eukaryota</taxon>
        <taxon>Metazoa</taxon>
        <taxon>Chordata</taxon>
        <taxon>Craniata</taxon>
        <taxon>Vertebrata</taxon>
        <taxon>Euteleostomi</taxon>
        <taxon>Mammalia</taxon>
        <taxon>Eutheria</taxon>
        <taxon>Euarchontoglires</taxon>
        <taxon>Glires</taxon>
        <taxon>Rodentia</taxon>
        <taxon>Myomorpha</taxon>
        <taxon>Muroidea</taxon>
        <taxon>Muridae</taxon>
        <taxon>Murinae</taxon>
        <taxon>Mus</taxon>
        <taxon>Mus</taxon>
    </lineage>
</organism>
<feature type="chain" id="PRO_0000442197" description="Killer cell lectin-like receptor subfamily E member 1">
    <location>
        <begin position="1"/>
        <end position="226"/>
    </location>
</feature>
<feature type="topological domain" description="Cytoplasmic" evidence="12">
    <location>
        <begin position="1"/>
        <end position="68"/>
    </location>
</feature>
<feature type="transmembrane region" description="Helical; Signal-anchor for type II membrane protein" evidence="2">
    <location>
        <begin position="69"/>
        <end position="89"/>
    </location>
</feature>
<feature type="topological domain" description="Extracellular" evidence="12">
    <location>
        <begin position="90"/>
        <end position="226"/>
    </location>
</feature>
<feature type="domain" description="C-type lectin" evidence="3">
    <location>
        <begin position="120"/>
        <end position="225"/>
    </location>
</feature>
<feature type="region of interest" description="Disordered" evidence="4">
    <location>
        <begin position="1"/>
        <end position="28"/>
    </location>
</feature>
<feature type="compositionally biased region" description="Polar residues" evidence="4">
    <location>
        <begin position="7"/>
        <end position="18"/>
    </location>
</feature>
<feature type="glycosylation site" description="N-linked (GlcNAc...) asparagine" evidence="2">
    <location>
        <position position="145"/>
    </location>
</feature>
<feature type="disulfide bond" evidence="1">
    <location>
        <begin position="113"/>
        <end position="124"/>
    </location>
</feature>
<feature type="disulfide bond" evidence="1">
    <location>
        <begin position="141"/>
        <end position="224"/>
    </location>
</feature>
<feature type="disulfide bond" evidence="1">
    <location>
        <begin position="202"/>
        <end position="216"/>
    </location>
</feature>
<feature type="sequence conflict" description="In Ref. 1; AAM44080." evidence="12" ref="1">
    <original>D</original>
    <variation>E</variation>
    <location>
        <position position="136"/>
    </location>
</feature>
<protein>
    <recommendedName>
        <fullName evidence="10">Killer cell lectin-like receptor subfamily E member 1</fullName>
    </recommendedName>
</protein>
<accession>Q8CJC7</accession>
<accession>Q80WP0</accession>
<keyword id="KW-1003">Cell membrane</keyword>
<keyword id="KW-1015">Disulfide bond</keyword>
<keyword id="KW-0325">Glycoprotein</keyword>
<keyword id="KW-0430">Lectin</keyword>
<keyword id="KW-0472">Membrane</keyword>
<keyword id="KW-0675">Receptor</keyword>
<keyword id="KW-1185">Reference proteome</keyword>
<keyword id="KW-0735">Signal-anchor</keyword>
<keyword id="KW-0812">Transmembrane</keyword>
<keyword id="KW-1133">Transmembrane helix</keyword>
<gene>
    <name evidence="10" type="primary">Klre1</name>
    <name evidence="11" type="synonym">NKG2I</name>
</gene>
<sequence>MDEAPVTRSTLNVNSQQKSKAKNKIKNTLNSNELSSIEQRKKYQKHLKKHKNTAEDISGKGNCSPPWRLLSSVLGAMCLLLMAVAMVMTTFTTKSSSERSSSTIQQEGLHHPCPENWVWFRCSCYFFSKEELIWRDSQRACLSLNSSLIRMNKEEMNFFSLKSFFWVGVYYNETRRQWLWEDHSVLPSGLFSKLEANMKNFCASYKSKEAYMEENCANKLTYICKK</sequence>
<name>KLRE1_MOUSE</name>
<reference evidence="13" key="1">
    <citation type="journal article" date="2003" name="J. Exp. Med.">
        <title>The lectin-like receptor KLRE1 inhibits natural killer cell cytotoxicity.</title>
        <authorList>
            <person name="Westgaard I.H."/>
            <person name="Dissen E."/>
            <person name="Torgersen K.M."/>
            <person name="Lazetic S."/>
            <person name="Lanier L.L."/>
            <person name="Phillips J.H."/>
            <person name="Fossum S."/>
        </authorList>
    </citation>
    <scope>NUCLEOTIDE SEQUENCE [MRNA]</scope>
    <scope>SUBCELLULAR LOCATION</scope>
    <scope>TISSUE SPECIFICITY</scope>
    <source>
        <strain evidence="13">CB-17/SCID</strain>
    </source>
</reference>
<reference evidence="14" key="2">
    <citation type="journal article" date="2004" name="J. Exp. Med.">
        <title>Bone marrow allograft rejection mediated by a novel murine NK receptor, NKG2I.</title>
        <authorList>
            <person name="Koike J."/>
            <person name="Wakao H."/>
            <person name="Ishizuka Y."/>
            <person name="Sato T.A."/>
            <person name="Hamaoki M."/>
            <person name="Seino K."/>
            <person name="Koseki H."/>
            <person name="Nakayama T."/>
            <person name="Taniguchi M."/>
        </authorList>
    </citation>
    <scope>NUCLEOTIDE SEQUENCE [MRNA]</scope>
    <scope>FUNCTION</scope>
    <scope>SUBUNIT</scope>
    <scope>SUBCELLULAR LOCATION</scope>
    <scope>TISSUE SPECIFICITY</scope>
    <source>
        <strain evidence="14">C57BL/6J</strain>
        <tissue evidence="14">Spleen</tissue>
    </source>
</reference>
<reference key="3">
    <citation type="journal article" date="2004" name="J. Exp. Med.">
        <authorList>
            <person name="Koike J."/>
            <person name="Wakao H."/>
            <person name="Ishizuka Y."/>
            <person name="Sato T.A."/>
            <person name="Hamaoki M."/>
            <person name="Seino K."/>
            <person name="Koseki H."/>
            <person name="Nakayama T."/>
            <person name="Taniguchi M."/>
        </authorList>
    </citation>
    <scope>ERRATUM OF PUBMED:14707119</scope>
</reference>
<reference evidence="15" key="4">
    <citation type="journal article" date="2009" name="PLoS Biol.">
        <title>Lineage-specific biology revealed by a finished genome assembly of the mouse.</title>
        <authorList>
            <person name="Church D.M."/>
            <person name="Goodstadt L."/>
            <person name="Hillier L.W."/>
            <person name="Zody M.C."/>
            <person name="Goldstein S."/>
            <person name="She X."/>
            <person name="Bult C.J."/>
            <person name="Agarwala R."/>
            <person name="Cherry J.L."/>
            <person name="DiCuccio M."/>
            <person name="Hlavina W."/>
            <person name="Kapustin Y."/>
            <person name="Meric P."/>
            <person name="Maglott D."/>
            <person name="Birtle Z."/>
            <person name="Marques A.C."/>
            <person name="Graves T."/>
            <person name="Zhou S."/>
            <person name="Teague B."/>
            <person name="Potamousis K."/>
            <person name="Churas C."/>
            <person name="Place M."/>
            <person name="Herschleb J."/>
            <person name="Runnheim R."/>
            <person name="Forrest D."/>
            <person name="Amos-Landgraf J."/>
            <person name="Schwartz D.C."/>
            <person name="Cheng Z."/>
            <person name="Lindblad-Toh K."/>
            <person name="Eichler E.E."/>
            <person name="Ponting C.P."/>
        </authorList>
    </citation>
    <scope>NUCLEOTIDE SEQUENCE [LARGE SCALE GENOMIC DNA]</scope>
    <source>
        <strain>C57BL/6J</strain>
    </source>
</reference>
<reference evidence="12" key="5">
    <citation type="journal article" date="2003" name="Immunogenetics">
        <title>Identification of a new murine lectin-like gene in close proximity to CD94.</title>
        <authorList>
            <person name="Wilhelm B.T."/>
            <person name="Mager D.L."/>
        </authorList>
    </citation>
    <scope>IDENTIFICATION</scope>
    <scope>TISSUE SPECIFICITY</scope>
</reference>
<reference evidence="12" key="6">
    <citation type="journal article" date="2004" name="Blood">
        <title>Role of a NK receptor, KLRE-1, in bone marrow allograft rejection: analysis with KLRE-1-deficient mice.</title>
        <authorList>
            <person name="Shimizu E."/>
            <person name="Koike J."/>
            <person name="Wakao H."/>
            <person name="Seino K."/>
            <person name="Koseki H."/>
            <person name="Kakiuchi T."/>
            <person name="Nakayama T."/>
            <person name="Taniguchi M."/>
        </authorList>
    </citation>
    <scope>FUNCTION</scope>
    <scope>SUBCELLULAR LOCATION</scope>
    <scope>DISRUPTION PHENOTYPE</scope>
</reference>
<reference evidence="12" key="7">
    <citation type="journal article" date="2008" name="J. Immunol.">
        <title>KLRE/I1 and KLRE/I2: a novel pair of heterodimeric receptors that inversely regulate NK cell cytotoxicity.</title>
        <authorList>
            <person name="Saether P.C."/>
            <person name="Westgaard I.H."/>
            <person name="Hoelsbrekken S.E."/>
            <person name="Benjamin J."/>
            <person name="Lanier L.L."/>
            <person name="Fossum S."/>
            <person name="Dissen E."/>
        </authorList>
    </citation>
    <scope>FUNCTION</scope>
    <scope>SUBUNIT</scope>
    <scope>SUBCELLULAR LOCATION</scope>
</reference>
<evidence type="ECO:0000250" key="1">
    <source>
        <dbReference type="UniProtKB" id="Q13241"/>
    </source>
</evidence>
<evidence type="ECO:0000255" key="2"/>
<evidence type="ECO:0000255" key="3">
    <source>
        <dbReference type="PROSITE-ProRule" id="PRU00040"/>
    </source>
</evidence>
<evidence type="ECO:0000256" key="4">
    <source>
        <dbReference type="SAM" id="MobiDB-lite"/>
    </source>
</evidence>
<evidence type="ECO:0000269" key="5">
    <source>
    </source>
</evidence>
<evidence type="ECO:0000269" key="6">
    <source>
    </source>
</evidence>
<evidence type="ECO:0000269" key="7">
    <source>
    </source>
</evidence>
<evidence type="ECO:0000269" key="8">
    <source>
    </source>
</evidence>
<evidence type="ECO:0000269" key="9">
    <source>
    </source>
</evidence>
<evidence type="ECO:0000303" key="10">
    <source>
    </source>
</evidence>
<evidence type="ECO:0000303" key="11">
    <source>
    </source>
</evidence>
<evidence type="ECO:0000305" key="12"/>
<evidence type="ECO:0000312" key="13">
    <source>
        <dbReference type="EMBL" id="AAM44080.1"/>
    </source>
</evidence>
<evidence type="ECO:0000312" key="14">
    <source>
        <dbReference type="EMBL" id="AAN31172.1"/>
    </source>
</evidence>
<evidence type="ECO:0000312" key="15">
    <source>
        <dbReference type="Proteomes" id="UP000000589"/>
    </source>
</evidence>
<dbReference type="EMBL" id="AY100458">
    <property type="protein sequence ID" value="AAM44080.1"/>
    <property type="molecule type" value="mRNA"/>
</dbReference>
<dbReference type="EMBL" id="AF306663">
    <property type="protein sequence ID" value="AAN31172.1"/>
    <property type="molecule type" value="mRNA"/>
</dbReference>
<dbReference type="EMBL" id="AC161602">
    <property type="status" value="NOT_ANNOTATED_CDS"/>
    <property type="molecule type" value="Genomic_DNA"/>
</dbReference>
<dbReference type="CCDS" id="CCDS20589.1"/>
<dbReference type="RefSeq" id="NP_001368915.1">
    <property type="nucleotide sequence ID" value="NM_001381986.1"/>
</dbReference>
<dbReference type="RefSeq" id="NP_705818.3">
    <property type="nucleotide sequence ID" value="NM_153590.3"/>
</dbReference>
<dbReference type="RefSeq" id="XP_006506186.1">
    <property type="nucleotide sequence ID" value="XM_006506123.4"/>
</dbReference>
<dbReference type="RefSeq" id="XP_006506189.1">
    <property type="nucleotide sequence ID" value="XM_006506126.1"/>
</dbReference>
<dbReference type="RefSeq" id="XP_017177078.1">
    <property type="nucleotide sequence ID" value="XM_017321589.3"/>
</dbReference>
<dbReference type="SMR" id="Q8CJC7"/>
<dbReference type="FunCoup" id="Q8CJC7">
    <property type="interactions" value="54"/>
</dbReference>
<dbReference type="STRING" id="10090.ENSMUSP00000055779"/>
<dbReference type="GlyCosmos" id="Q8CJC7">
    <property type="glycosylation" value="1 site, No reported glycans"/>
</dbReference>
<dbReference type="GlyGen" id="Q8CJC7">
    <property type="glycosylation" value="1 site"/>
</dbReference>
<dbReference type="PaxDb" id="10090-ENSMUSP00000055779"/>
<dbReference type="ProteomicsDB" id="264784"/>
<dbReference type="DNASU" id="243655"/>
<dbReference type="Ensembl" id="ENSMUST00000053708.9">
    <property type="protein sequence ID" value="ENSMUSP00000055779.7"/>
    <property type="gene ID" value="ENSMUSG00000050241.9"/>
</dbReference>
<dbReference type="GeneID" id="243655"/>
<dbReference type="KEGG" id="mmu:243655"/>
<dbReference type="UCSC" id="uc009egb.1">
    <property type="organism name" value="mouse"/>
</dbReference>
<dbReference type="AGR" id="MGI:2662547"/>
<dbReference type="CTD" id="243655"/>
<dbReference type="MGI" id="MGI:2662547">
    <property type="gene designation" value="Klre1"/>
</dbReference>
<dbReference type="VEuPathDB" id="HostDB:ENSMUSG00000050241"/>
<dbReference type="eggNOG" id="KOG4297">
    <property type="taxonomic scope" value="Eukaryota"/>
</dbReference>
<dbReference type="GeneTree" id="ENSGT00940000164373"/>
<dbReference type="HOGENOM" id="CLU_049894_9_3_1"/>
<dbReference type="InParanoid" id="Q8CJC7"/>
<dbReference type="OMA" id="HHPCPEN"/>
<dbReference type="OrthoDB" id="6133475at2759"/>
<dbReference type="PhylomeDB" id="Q8CJC7"/>
<dbReference type="TreeFam" id="TF336674"/>
<dbReference type="BioGRID-ORCS" id="243655">
    <property type="hits" value="0 hits in 76 CRISPR screens"/>
</dbReference>
<dbReference type="ChiTaRS" id="Klre1">
    <property type="organism name" value="mouse"/>
</dbReference>
<dbReference type="PRO" id="PR:Q8CJC7"/>
<dbReference type="Proteomes" id="UP000000589">
    <property type="component" value="Chromosome 6"/>
</dbReference>
<dbReference type="RNAct" id="Q8CJC7">
    <property type="molecule type" value="protein"/>
</dbReference>
<dbReference type="Bgee" id="ENSMUSG00000050241">
    <property type="expression patterns" value="Expressed in blood and 22 other cell types or tissues"/>
</dbReference>
<dbReference type="ExpressionAtlas" id="Q8CJC7">
    <property type="expression patterns" value="baseline and differential"/>
</dbReference>
<dbReference type="GO" id="GO:0009897">
    <property type="term" value="C:external side of plasma membrane"/>
    <property type="evidence" value="ECO:0000314"/>
    <property type="project" value="MGI"/>
</dbReference>
<dbReference type="GO" id="GO:0005886">
    <property type="term" value="C:plasma membrane"/>
    <property type="evidence" value="ECO:0000314"/>
    <property type="project" value="MGI"/>
</dbReference>
<dbReference type="GO" id="GO:0030246">
    <property type="term" value="F:carbohydrate binding"/>
    <property type="evidence" value="ECO:0007669"/>
    <property type="project" value="UniProtKB-KW"/>
</dbReference>
<dbReference type="GO" id="GO:0042802">
    <property type="term" value="F:identical protein binding"/>
    <property type="evidence" value="ECO:0000353"/>
    <property type="project" value="MGI"/>
</dbReference>
<dbReference type="GO" id="GO:0019903">
    <property type="term" value="F:protein phosphatase binding"/>
    <property type="evidence" value="ECO:0007669"/>
    <property type="project" value="Ensembl"/>
</dbReference>
<dbReference type="GO" id="GO:0004888">
    <property type="term" value="F:transmembrane signaling receptor activity"/>
    <property type="evidence" value="ECO:0000314"/>
    <property type="project" value="MGI"/>
</dbReference>
<dbReference type="GO" id="GO:0030101">
    <property type="term" value="P:natural killer cell activation"/>
    <property type="evidence" value="ECO:0000314"/>
    <property type="project" value="MGI"/>
</dbReference>
<dbReference type="GO" id="GO:0002859">
    <property type="term" value="P:negative regulation of natural killer cell mediated cytotoxicity directed against tumor cell target"/>
    <property type="evidence" value="ECO:0007669"/>
    <property type="project" value="Ensembl"/>
</dbReference>
<dbReference type="GO" id="GO:0045954">
    <property type="term" value="P:positive regulation of natural killer cell mediated cytotoxicity"/>
    <property type="evidence" value="ECO:0000315"/>
    <property type="project" value="MGI"/>
</dbReference>
<dbReference type="GO" id="GO:0032729">
    <property type="term" value="P:positive regulation of type II interferon production"/>
    <property type="evidence" value="ECO:0000314"/>
    <property type="project" value="MGI"/>
</dbReference>
<dbReference type="GO" id="GO:0002223">
    <property type="term" value="P:stimulatory C-type lectin receptor signaling pathway"/>
    <property type="evidence" value="ECO:0000314"/>
    <property type="project" value="MGI"/>
</dbReference>
<dbReference type="CDD" id="cd03593">
    <property type="entry name" value="CLECT_NK_receptors_like"/>
    <property type="match status" value="1"/>
</dbReference>
<dbReference type="FunFam" id="3.10.100.10:FF:000249">
    <property type="match status" value="1"/>
</dbReference>
<dbReference type="Gene3D" id="3.10.100.10">
    <property type="entry name" value="Mannose-Binding Protein A, subunit A"/>
    <property type="match status" value="1"/>
</dbReference>
<dbReference type="InterPro" id="IPR001304">
    <property type="entry name" value="C-type_lectin-like"/>
</dbReference>
<dbReference type="InterPro" id="IPR016186">
    <property type="entry name" value="C-type_lectin-like/link_sf"/>
</dbReference>
<dbReference type="InterPro" id="IPR016187">
    <property type="entry name" value="CTDL_fold"/>
</dbReference>
<dbReference type="InterPro" id="IPR050919">
    <property type="entry name" value="NKG2/CD94_NK_receptors"/>
</dbReference>
<dbReference type="InterPro" id="IPR033992">
    <property type="entry name" value="NKR-like_CTLD"/>
</dbReference>
<dbReference type="PANTHER" id="PTHR22800">
    <property type="entry name" value="C-TYPE LECTIN PROTEINS"/>
    <property type="match status" value="1"/>
</dbReference>
<dbReference type="PANTHER" id="PTHR22800:SF256">
    <property type="entry name" value="KILLER CELL LECTIN-LIKE RECEPTOR SUBFAMILY E MEMBER 1"/>
    <property type="match status" value="1"/>
</dbReference>
<dbReference type="Pfam" id="PF00059">
    <property type="entry name" value="Lectin_C"/>
    <property type="match status" value="1"/>
</dbReference>
<dbReference type="SMART" id="SM00034">
    <property type="entry name" value="CLECT"/>
    <property type="match status" value="1"/>
</dbReference>
<dbReference type="SUPFAM" id="SSF56436">
    <property type="entry name" value="C-type lectin-like"/>
    <property type="match status" value="1"/>
</dbReference>
<dbReference type="PROSITE" id="PS50041">
    <property type="entry name" value="C_TYPE_LECTIN_2"/>
    <property type="match status" value="1"/>
</dbReference>
<proteinExistence type="evidence at protein level"/>